<feature type="chain" id="PRO_1000199058" description="Cysteine--tRNA ligase">
    <location>
        <begin position="1"/>
        <end position="485"/>
    </location>
</feature>
<feature type="short sequence motif" description="'HIGH' region">
    <location>
        <begin position="29"/>
        <end position="39"/>
    </location>
</feature>
<feature type="short sequence motif" description="'KMSKS' region">
    <location>
        <begin position="265"/>
        <end position="269"/>
    </location>
</feature>
<feature type="binding site" evidence="1">
    <location>
        <position position="27"/>
    </location>
    <ligand>
        <name>Zn(2+)</name>
        <dbReference type="ChEBI" id="CHEBI:29105"/>
    </ligand>
</feature>
<feature type="binding site" evidence="1">
    <location>
        <position position="208"/>
    </location>
    <ligand>
        <name>Zn(2+)</name>
        <dbReference type="ChEBI" id="CHEBI:29105"/>
    </ligand>
</feature>
<feature type="binding site" evidence="1">
    <location>
        <position position="233"/>
    </location>
    <ligand>
        <name>Zn(2+)</name>
        <dbReference type="ChEBI" id="CHEBI:29105"/>
    </ligand>
</feature>
<feature type="binding site" evidence="1">
    <location>
        <position position="237"/>
    </location>
    <ligand>
        <name>Zn(2+)</name>
        <dbReference type="ChEBI" id="CHEBI:29105"/>
    </ligand>
</feature>
<feature type="binding site" evidence="1">
    <location>
        <position position="268"/>
    </location>
    <ligand>
        <name>ATP</name>
        <dbReference type="ChEBI" id="CHEBI:30616"/>
    </ligand>
</feature>
<keyword id="KW-0030">Aminoacyl-tRNA synthetase</keyword>
<keyword id="KW-0067">ATP-binding</keyword>
<keyword id="KW-0963">Cytoplasm</keyword>
<keyword id="KW-0436">Ligase</keyword>
<keyword id="KW-0479">Metal-binding</keyword>
<keyword id="KW-0547">Nucleotide-binding</keyword>
<keyword id="KW-0648">Protein biosynthesis</keyword>
<keyword id="KW-0862">Zinc</keyword>
<sequence>MQLYNTLTRKKEHFEPAVPGKVNMYVCGITAYDLCHIGHARSAVVFDVLVRYLRHTGLDVTFARNFTDVDDKIITRANQEGLTSQEVAEKYIATFYEDMDRLNVLRADLEPRATTHIEEMISLCVRLIEQDKAYATPSGDVYFRVRAFPGYGKLSGRDVDDLRSGARVAPGEEKEDPLDFALWKAAKPGEPFWESPWGNGRPGWHIECSAMSEKHLPLPLDIHGGGQDLVFPHHENEIAQTEAALGKDFVRYWVHNGFVQVNAEKMSKSLGNFRTIRDILENYLPETLRYFLLTKHYRSPIDFTFESMDEAEKNLKRIYEALGLLHAELEREKWTSGPLPKDVTEEFEGLRQAFADAMEDDMNTAAALGHVFTMVRLANRILDNKGQRKTEGARAFFRAVLDEAATWFAVLGVFGREPAGFLAELRACRVARKGIDPAKVEELLQARINARADKDFARADAIRDEIAALGIEVRDTPSGAVWDVL</sequence>
<accession>B8DKL0</accession>
<organism>
    <name type="scientific">Nitratidesulfovibrio vulgaris (strain DSM 19637 / Miyazaki F)</name>
    <name type="common">Desulfovibrio vulgaris</name>
    <dbReference type="NCBI Taxonomy" id="883"/>
    <lineage>
        <taxon>Bacteria</taxon>
        <taxon>Pseudomonadati</taxon>
        <taxon>Thermodesulfobacteriota</taxon>
        <taxon>Desulfovibrionia</taxon>
        <taxon>Desulfovibrionales</taxon>
        <taxon>Desulfovibrionaceae</taxon>
        <taxon>Nitratidesulfovibrio</taxon>
    </lineage>
</organism>
<dbReference type="EC" id="6.1.1.16" evidence="1"/>
<dbReference type="EMBL" id="CP001197">
    <property type="protein sequence ID" value="ACL07439.1"/>
    <property type="molecule type" value="Genomic_DNA"/>
</dbReference>
<dbReference type="SMR" id="B8DKL0"/>
<dbReference type="STRING" id="883.DvMF_0482"/>
<dbReference type="KEGG" id="dvm:DvMF_0482"/>
<dbReference type="eggNOG" id="COG0215">
    <property type="taxonomic scope" value="Bacteria"/>
</dbReference>
<dbReference type="HOGENOM" id="CLU_013528_0_1_7"/>
<dbReference type="OrthoDB" id="9815130at2"/>
<dbReference type="GO" id="GO:0005829">
    <property type="term" value="C:cytosol"/>
    <property type="evidence" value="ECO:0007669"/>
    <property type="project" value="TreeGrafter"/>
</dbReference>
<dbReference type="GO" id="GO:0005524">
    <property type="term" value="F:ATP binding"/>
    <property type="evidence" value="ECO:0007669"/>
    <property type="project" value="UniProtKB-UniRule"/>
</dbReference>
<dbReference type="GO" id="GO:0004817">
    <property type="term" value="F:cysteine-tRNA ligase activity"/>
    <property type="evidence" value="ECO:0007669"/>
    <property type="project" value="UniProtKB-UniRule"/>
</dbReference>
<dbReference type="GO" id="GO:0008270">
    <property type="term" value="F:zinc ion binding"/>
    <property type="evidence" value="ECO:0007669"/>
    <property type="project" value="UniProtKB-UniRule"/>
</dbReference>
<dbReference type="GO" id="GO:0006423">
    <property type="term" value="P:cysteinyl-tRNA aminoacylation"/>
    <property type="evidence" value="ECO:0007669"/>
    <property type="project" value="UniProtKB-UniRule"/>
</dbReference>
<dbReference type="CDD" id="cd00672">
    <property type="entry name" value="CysRS_core"/>
    <property type="match status" value="1"/>
</dbReference>
<dbReference type="FunFam" id="3.40.50.620:FF:000009">
    <property type="entry name" value="Cysteine--tRNA ligase"/>
    <property type="match status" value="1"/>
</dbReference>
<dbReference type="Gene3D" id="1.20.120.1910">
    <property type="entry name" value="Cysteine-tRNA ligase, C-terminal anti-codon recognition domain"/>
    <property type="match status" value="1"/>
</dbReference>
<dbReference type="Gene3D" id="3.40.50.620">
    <property type="entry name" value="HUPs"/>
    <property type="match status" value="1"/>
</dbReference>
<dbReference type="HAMAP" id="MF_00041">
    <property type="entry name" value="Cys_tRNA_synth"/>
    <property type="match status" value="1"/>
</dbReference>
<dbReference type="InterPro" id="IPR015803">
    <property type="entry name" value="Cys-tRNA-ligase"/>
</dbReference>
<dbReference type="InterPro" id="IPR015273">
    <property type="entry name" value="Cys-tRNA-synt_Ia_DALR"/>
</dbReference>
<dbReference type="InterPro" id="IPR024909">
    <property type="entry name" value="Cys-tRNA/MSH_ligase"/>
</dbReference>
<dbReference type="InterPro" id="IPR056411">
    <property type="entry name" value="CysS_C"/>
</dbReference>
<dbReference type="InterPro" id="IPR014729">
    <property type="entry name" value="Rossmann-like_a/b/a_fold"/>
</dbReference>
<dbReference type="InterPro" id="IPR032678">
    <property type="entry name" value="tRNA-synt_1_cat_dom"/>
</dbReference>
<dbReference type="InterPro" id="IPR009080">
    <property type="entry name" value="tRNAsynth_Ia_anticodon-bd"/>
</dbReference>
<dbReference type="NCBIfam" id="TIGR00435">
    <property type="entry name" value="cysS"/>
    <property type="match status" value="1"/>
</dbReference>
<dbReference type="PANTHER" id="PTHR10890:SF3">
    <property type="entry name" value="CYSTEINE--TRNA LIGASE, CYTOPLASMIC"/>
    <property type="match status" value="1"/>
</dbReference>
<dbReference type="PANTHER" id="PTHR10890">
    <property type="entry name" value="CYSTEINYL-TRNA SYNTHETASE"/>
    <property type="match status" value="1"/>
</dbReference>
<dbReference type="Pfam" id="PF23493">
    <property type="entry name" value="CysS_C"/>
    <property type="match status" value="1"/>
</dbReference>
<dbReference type="Pfam" id="PF09190">
    <property type="entry name" value="DALR_2"/>
    <property type="match status" value="1"/>
</dbReference>
<dbReference type="Pfam" id="PF01406">
    <property type="entry name" value="tRNA-synt_1e"/>
    <property type="match status" value="1"/>
</dbReference>
<dbReference type="PRINTS" id="PR00983">
    <property type="entry name" value="TRNASYNTHCYS"/>
</dbReference>
<dbReference type="SMART" id="SM00840">
    <property type="entry name" value="DALR_2"/>
    <property type="match status" value="1"/>
</dbReference>
<dbReference type="SUPFAM" id="SSF47323">
    <property type="entry name" value="Anticodon-binding domain of a subclass of class I aminoacyl-tRNA synthetases"/>
    <property type="match status" value="1"/>
</dbReference>
<dbReference type="SUPFAM" id="SSF52374">
    <property type="entry name" value="Nucleotidylyl transferase"/>
    <property type="match status" value="1"/>
</dbReference>
<reference key="1">
    <citation type="submission" date="2008-10" db="EMBL/GenBank/DDBJ databases">
        <title>Complete sequence of Desulfovibrio vulgaris str. 'Miyazaki F'.</title>
        <authorList>
            <person name="Lucas S."/>
            <person name="Copeland A."/>
            <person name="Lapidus A."/>
            <person name="Glavina del Rio T."/>
            <person name="Dalin E."/>
            <person name="Tice H."/>
            <person name="Bruce D."/>
            <person name="Goodwin L."/>
            <person name="Pitluck S."/>
            <person name="Sims D."/>
            <person name="Brettin T."/>
            <person name="Detter J.C."/>
            <person name="Han C."/>
            <person name="Larimer F."/>
            <person name="Land M."/>
            <person name="Hauser L."/>
            <person name="Kyrpides N."/>
            <person name="Mikhailova N."/>
            <person name="Hazen T.C."/>
            <person name="Richardson P."/>
        </authorList>
    </citation>
    <scope>NUCLEOTIDE SEQUENCE [LARGE SCALE GENOMIC DNA]</scope>
    <source>
        <strain>DSM 19637 / Miyazaki F</strain>
    </source>
</reference>
<protein>
    <recommendedName>
        <fullName evidence="1">Cysteine--tRNA ligase</fullName>
        <ecNumber evidence="1">6.1.1.16</ecNumber>
    </recommendedName>
    <alternativeName>
        <fullName evidence="1">Cysteinyl-tRNA synthetase</fullName>
        <shortName evidence="1">CysRS</shortName>
    </alternativeName>
</protein>
<name>SYC_NITV9</name>
<gene>
    <name evidence="1" type="primary">cysS</name>
    <name type="ordered locus">DvMF_0482</name>
</gene>
<proteinExistence type="inferred from homology"/>
<evidence type="ECO:0000255" key="1">
    <source>
        <dbReference type="HAMAP-Rule" id="MF_00041"/>
    </source>
</evidence>
<comment type="catalytic activity">
    <reaction evidence="1">
        <text>tRNA(Cys) + L-cysteine + ATP = L-cysteinyl-tRNA(Cys) + AMP + diphosphate</text>
        <dbReference type="Rhea" id="RHEA:17773"/>
        <dbReference type="Rhea" id="RHEA-COMP:9661"/>
        <dbReference type="Rhea" id="RHEA-COMP:9679"/>
        <dbReference type="ChEBI" id="CHEBI:30616"/>
        <dbReference type="ChEBI" id="CHEBI:33019"/>
        <dbReference type="ChEBI" id="CHEBI:35235"/>
        <dbReference type="ChEBI" id="CHEBI:78442"/>
        <dbReference type="ChEBI" id="CHEBI:78517"/>
        <dbReference type="ChEBI" id="CHEBI:456215"/>
        <dbReference type="EC" id="6.1.1.16"/>
    </reaction>
</comment>
<comment type="cofactor">
    <cofactor evidence="1">
        <name>Zn(2+)</name>
        <dbReference type="ChEBI" id="CHEBI:29105"/>
    </cofactor>
    <text evidence="1">Binds 1 zinc ion per subunit.</text>
</comment>
<comment type="subunit">
    <text evidence="1">Monomer.</text>
</comment>
<comment type="subcellular location">
    <subcellularLocation>
        <location evidence="1">Cytoplasm</location>
    </subcellularLocation>
</comment>
<comment type="similarity">
    <text evidence="1">Belongs to the class-I aminoacyl-tRNA synthetase family.</text>
</comment>